<keyword id="KW-0030">Aminoacyl-tRNA synthetase</keyword>
<keyword id="KW-0067">ATP-binding</keyword>
<keyword id="KW-0963">Cytoplasm</keyword>
<keyword id="KW-0436">Ligase</keyword>
<keyword id="KW-0479">Metal-binding</keyword>
<keyword id="KW-0547">Nucleotide-binding</keyword>
<keyword id="KW-0648">Protein biosynthesis</keyword>
<keyword id="KW-1185">Reference proteome</keyword>
<keyword id="KW-0862">Zinc</keyword>
<proteinExistence type="evidence at protein level"/>
<gene>
    <name type="primary">serS</name>
    <name type="ordered locus">MMP0879</name>
</gene>
<accession>O30520</accession>
<comment type="function">
    <text evidence="2 3">Catalyzes the attachment of serine to tRNA(Ser). Is also able to aminoacylate tRNA(Sec) with serine, to form the misacylated tRNA L-seryl-tRNA(Sec), which will be further converted into selenocysteinyl-tRNA(Sec).</text>
</comment>
<comment type="catalytic activity">
    <reaction>
        <text>tRNA(Ser) + L-serine + ATP = L-seryl-tRNA(Ser) + AMP + diphosphate + H(+)</text>
        <dbReference type="Rhea" id="RHEA:12292"/>
        <dbReference type="Rhea" id="RHEA-COMP:9669"/>
        <dbReference type="Rhea" id="RHEA-COMP:9703"/>
        <dbReference type="ChEBI" id="CHEBI:15378"/>
        <dbReference type="ChEBI" id="CHEBI:30616"/>
        <dbReference type="ChEBI" id="CHEBI:33019"/>
        <dbReference type="ChEBI" id="CHEBI:33384"/>
        <dbReference type="ChEBI" id="CHEBI:78442"/>
        <dbReference type="ChEBI" id="CHEBI:78533"/>
        <dbReference type="ChEBI" id="CHEBI:456215"/>
        <dbReference type="EC" id="6.1.1.11"/>
    </reaction>
</comment>
<comment type="catalytic activity">
    <reaction>
        <text>tRNA(Sec) + L-serine + ATP = L-seryl-tRNA(Sec) + AMP + diphosphate + H(+)</text>
        <dbReference type="Rhea" id="RHEA:42580"/>
        <dbReference type="Rhea" id="RHEA-COMP:9742"/>
        <dbReference type="Rhea" id="RHEA-COMP:10128"/>
        <dbReference type="ChEBI" id="CHEBI:15378"/>
        <dbReference type="ChEBI" id="CHEBI:30616"/>
        <dbReference type="ChEBI" id="CHEBI:33019"/>
        <dbReference type="ChEBI" id="CHEBI:33384"/>
        <dbReference type="ChEBI" id="CHEBI:78442"/>
        <dbReference type="ChEBI" id="CHEBI:78533"/>
        <dbReference type="ChEBI" id="CHEBI:456215"/>
        <dbReference type="EC" id="6.1.1.11"/>
    </reaction>
</comment>
<comment type="cofactor">
    <cofactor evidence="1">
        <name>Zn(2+)</name>
        <dbReference type="ChEBI" id="CHEBI:29105"/>
    </cofactor>
    <text evidence="1">Binds 1 Zn(2+) ion per subunit. This ion is coordinated with 2 cysteines, 1 glutamate and a water molecule that dissociates from the zinc ion to allow the coordination of the amino group of the serine substrate, which is essential for catalysis.</text>
</comment>
<comment type="pathway">
    <text>Aminoacyl-tRNA biosynthesis; selenocysteinyl-tRNA(Sec) biosynthesis; L-seryl-tRNA(Sec) from L-serine and tRNA(Sec): step 1/1.</text>
</comment>
<comment type="subunit">
    <text evidence="2">Homodimer.</text>
</comment>
<comment type="subcellular location">
    <subcellularLocation>
        <location evidence="1">Cytoplasm</location>
    </subcellularLocation>
</comment>
<comment type="domain">
    <text evidence="1">Consists of two distinct domains, a catalytic core and a N-terminal extension that is presumably involved in tRNA binding.</text>
</comment>
<comment type="similarity">
    <text evidence="4">Belongs to the class-II aminoacyl-tRNA synthetase family. Type-2 seryl-tRNA synthetase subfamily.</text>
</comment>
<name>SYS2_METMP</name>
<evidence type="ECO:0000250" key="1"/>
<evidence type="ECO:0000269" key="2">
    <source>
    </source>
</evidence>
<evidence type="ECO:0000269" key="3">
    <source>
    </source>
</evidence>
<evidence type="ECO:0000305" key="4"/>
<organism>
    <name type="scientific">Methanococcus maripaludis (strain DSM 14266 / JCM 13030 / NBRC 101832 / S2 / LL)</name>
    <dbReference type="NCBI Taxonomy" id="267377"/>
    <lineage>
        <taxon>Archaea</taxon>
        <taxon>Methanobacteriati</taxon>
        <taxon>Methanobacteriota</taxon>
        <taxon>Methanomada group</taxon>
        <taxon>Methanococci</taxon>
        <taxon>Methanococcales</taxon>
        <taxon>Methanococcaceae</taxon>
        <taxon>Methanococcus</taxon>
    </lineage>
</organism>
<feature type="chain" id="PRO_0000122176" description="Type-2 serine--tRNA ligase">
    <location>
        <begin position="1"/>
        <end position="514"/>
    </location>
</feature>
<feature type="binding site" evidence="1">
    <location>
        <position position="313"/>
    </location>
    <ligand>
        <name>L-serine</name>
        <dbReference type="ChEBI" id="CHEBI:33384"/>
    </ligand>
</feature>
<feature type="binding site" evidence="1">
    <location>
        <position position="315"/>
    </location>
    <ligand>
        <name>Zn(2+)</name>
        <dbReference type="ChEBI" id="CHEBI:29105"/>
        <note>catalytic</note>
    </ligand>
</feature>
<feature type="binding site" evidence="1">
    <location>
        <begin position="344"/>
        <end position="346"/>
    </location>
    <ligand>
        <name>ATP</name>
        <dbReference type="ChEBI" id="CHEBI:30616"/>
    </ligand>
</feature>
<feature type="binding site" evidence="1">
    <location>
        <position position="344"/>
    </location>
    <ligand>
        <name>L-serine</name>
        <dbReference type="ChEBI" id="CHEBI:33384"/>
    </ligand>
</feature>
<feature type="binding site" evidence="1">
    <location>
        <begin position="355"/>
        <end position="356"/>
    </location>
    <ligand>
        <name>ATP</name>
        <dbReference type="ChEBI" id="CHEBI:30616"/>
    </ligand>
</feature>
<feature type="binding site" evidence="1">
    <location>
        <begin position="361"/>
        <end position="363"/>
    </location>
    <ligand>
        <name>L-serine</name>
        <dbReference type="ChEBI" id="CHEBI:33384"/>
    </ligand>
</feature>
<feature type="binding site" evidence="1">
    <location>
        <position position="363"/>
    </location>
    <ligand>
        <name>Zn(2+)</name>
        <dbReference type="ChEBI" id="CHEBI:29105"/>
        <note>catalytic</note>
    </ligand>
</feature>
<feature type="binding site" evidence="1">
    <location>
        <position position="470"/>
    </location>
    <ligand>
        <name>Zn(2+)</name>
        <dbReference type="ChEBI" id="CHEBI:29105"/>
        <note>catalytic</note>
    </ligand>
</feature>
<feature type="binding site" evidence="1">
    <location>
        <position position="477"/>
    </location>
    <ligand>
        <name>ATP</name>
        <dbReference type="ChEBI" id="CHEBI:30616"/>
    </ligand>
</feature>
<feature type="sequence conflict" description="In Ref. 1; AAD03476." evidence="4" ref="1">
    <original>S</original>
    <variation>E</variation>
    <location>
        <position position="16"/>
    </location>
</feature>
<feature type="sequence conflict" description="In Ref. 1; AAD03476." evidence="4" ref="1">
    <original>E</original>
    <variation>Q</variation>
    <location>
        <position position="54"/>
    </location>
</feature>
<feature type="sequence conflict" description="In Ref. 1; AAD03476." evidence="4" ref="1">
    <original>T</original>
    <variation>S</variation>
    <location>
        <position position="100"/>
    </location>
</feature>
<feature type="sequence conflict" description="In Ref. 1; AAD03476." evidence="4" ref="1">
    <original>N</original>
    <variation>G</variation>
    <location>
        <position position="129"/>
    </location>
</feature>
<feature type="sequence conflict" description="In Ref. 1; AAD03476." evidence="4" ref="1">
    <original>F</original>
    <variation>K</variation>
    <location>
        <position position="169"/>
    </location>
</feature>
<feature type="sequence conflict" description="In Ref. 1; AAD03476." evidence="4" ref="1">
    <original>T</original>
    <variation>K</variation>
    <location>
        <position position="186"/>
    </location>
</feature>
<feature type="sequence conflict" description="In Ref. 1; AAD03476." evidence="4" ref="1">
    <original>V</original>
    <variation>I</variation>
    <location>
        <position position="239"/>
    </location>
</feature>
<feature type="sequence conflict" description="In Ref. 1; AAD03476." evidence="4" ref="1">
    <original>R</original>
    <variation>K</variation>
    <location>
        <position position="282"/>
    </location>
</feature>
<feature type="sequence conflict" description="In Ref. 1; AAD03476." evidence="4" ref="1">
    <original>D</original>
    <variation>E</variation>
    <location>
        <position position="297"/>
    </location>
</feature>
<dbReference type="EC" id="6.1.1.11"/>
<dbReference type="EMBL" id="AF009822">
    <property type="protein sequence ID" value="AAD03476.1"/>
    <property type="molecule type" value="Genomic_DNA"/>
</dbReference>
<dbReference type="EMBL" id="BX950229">
    <property type="protein sequence ID" value="CAF30435.1"/>
    <property type="molecule type" value="Genomic_DNA"/>
</dbReference>
<dbReference type="RefSeq" id="WP_011170823.1">
    <property type="nucleotide sequence ID" value="NC_005791.1"/>
</dbReference>
<dbReference type="SMR" id="O30520"/>
<dbReference type="STRING" id="267377.MMP0879"/>
<dbReference type="EnsemblBacteria" id="CAF30435">
    <property type="protein sequence ID" value="CAF30435"/>
    <property type="gene ID" value="MMP0879"/>
</dbReference>
<dbReference type="GeneID" id="2762696"/>
<dbReference type="KEGG" id="mmp:MMP0879"/>
<dbReference type="PATRIC" id="fig|267377.15.peg.905"/>
<dbReference type="eggNOG" id="arCOG00403">
    <property type="taxonomic scope" value="Archaea"/>
</dbReference>
<dbReference type="HOGENOM" id="CLU_542524_0_0_2"/>
<dbReference type="OrthoDB" id="115981at2157"/>
<dbReference type="BioCyc" id="MetaCyc:MONOMER-14955"/>
<dbReference type="UniPathway" id="UPA00906">
    <property type="reaction ID" value="UER00895"/>
</dbReference>
<dbReference type="Proteomes" id="UP000000590">
    <property type="component" value="Chromosome"/>
</dbReference>
<dbReference type="GO" id="GO:0005737">
    <property type="term" value="C:cytoplasm"/>
    <property type="evidence" value="ECO:0007669"/>
    <property type="project" value="UniProtKB-SubCell"/>
</dbReference>
<dbReference type="GO" id="GO:0005524">
    <property type="term" value="F:ATP binding"/>
    <property type="evidence" value="ECO:0007669"/>
    <property type="project" value="UniProtKB-UniRule"/>
</dbReference>
<dbReference type="GO" id="GO:0004828">
    <property type="term" value="F:serine-tRNA ligase activity"/>
    <property type="evidence" value="ECO:0007669"/>
    <property type="project" value="UniProtKB-UniRule"/>
</dbReference>
<dbReference type="GO" id="GO:0008270">
    <property type="term" value="F:zinc ion binding"/>
    <property type="evidence" value="ECO:0007669"/>
    <property type="project" value="UniProtKB-UniRule"/>
</dbReference>
<dbReference type="GO" id="GO:0016260">
    <property type="term" value="P:selenocysteine biosynthetic process"/>
    <property type="evidence" value="ECO:0007669"/>
    <property type="project" value="UniProtKB-UniRule"/>
</dbReference>
<dbReference type="GO" id="GO:0006434">
    <property type="term" value="P:seryl-tRNA aminoacylation"/>
    <property type="evidence" value="ECO:0007669"/>
    <property type="project" value="UniProtKB-UniRule"/>
</dbReference>
<dbReference type="CDD" id="cd00670">
    <property type="entry name" value="Gly_His_Pro_Ser_Thr_tRS_core"/>
    <property type="match status" value="1"/>
</dbReference>
<dbReference type="Gene3D" id="3.30.70.1920">
    <property type="match status" value="1"/>
</dbReference>
<dbReference type="Gene3D" id="3.30.930.10">
    <property type="entry name" value="Bira Bifunctional Protein, Domain 2"/>
    <property type="match status" value="1"/>
</dbReference>
<dbReference type="HAMAP" id="MF_01278">
    <property type="entry name" value="Ser_tRNA_synth_type2"/>
    <property type="match status" value="1"/>
</dbReference>
<dbReference type="InterPro" id="IPR045864">
    <property type="entry name" value="aa-tRNA-synth_II/BPL/LPL"/>
</dbReference>
<dbReference type="InterPro" id="IPR004503">
    <property type="entry name" value="Ser-tRNA-ligase_2_arc"/>
</dbReference>
<dbReference type="InterPro" id="IPR041293">
    <property type="entry name" value="SerS_tRNA-bd"/>
</dbReference>
<dbReference type="NCBIfam" id="NF002120">
    <property type="entry name" value="PRK00960.1"/>
    <property type="match status" value="1"/>
</dbReference>
<dbReference type="NCBIfam" id="TIGR00415">
    <property type="entry name" value="serS_MJ"/>
    <property type="match status" value="1"/>
</dbReference>
<dbReference type="Pfam" id="PF18490">
    <property type="entry name" value="tRNA_bind_4"/>
    <property type="match status" value="1"/>
</dbReference>
<dbReference type="SUPFAM" id="SSF55681">
    <property type="entry name" value="Class II aaRS and biotin synthetases"/>
    <property type="match status" value="1"/>
</dbReference>
<protein>
    <recommendedName>
        <fullName>Type-2 serine--tRNA ligase</fullName>
        <ecNumber>6.1.1.11</ecNumber>
    </recommendedName>
    <alternativeName>
        <fullName>Seryl-tRNA synthetase</fullName>
        <shortName>SerRS</shortName>
    </alternativeName>
    <alternativeName>
        <fullName>Seryl-tRNA(Ser/Sec) synthetase</fullName>
    </alternativeName>
</protein>
<sequence>MRFELEGRIIFSKDVSEETQKDIIEVLENGDIFLKGVPEGKENEASKIEGYEFEGKDLKLNMTSGTYTRAHEGIVRLKKPIMEKVGRKHQIGIRDVAIDTYVVTITATPSKVAELKGLKVPECEVELDNEKIKILFKNLGDGELKRNIIDRAIKFVKTELDKQEQDLTFEVCKIAPGTIVSDYKATREITFDKDPTELAEPYGWVKRFPGRGQWFYTAPMAKLFRAFESLIVEECIEKVGFDECLFPKLIPLDVMYKMRYLEGLPEGMYYVCPPKREPEMFRDFVNEMMIKKEIPIDKLKTLLRDPGYVLAPAQCEPFYTFFDHELVDVDSPSKFFDKSGWTYRWEGGGAKGLDRVNEFLRGECVWMGSPEFVEKVRDDTLKYAEKLAEKLDLEYWTEVGDDPFYLEGRKNEDRGIEFPDVPKYEMRLWLPHVKDERKGVAVTSANIHGTHFVEGFGIKDYKDRKVWTGCTGYGLSRWLIGFLAQYGYNYEDWPEIIQKKVGKLPEIPKLITWP</sequence>
<reference key="1">
    <citation type="journal article" date="1998" name="J. Bacteriol.">
        <title>Sequence divergence of seryl-tRNA synthetases in archaea.</title>
        <authorList>
            <person name="Kim H.-S."/>
            <person name="Vothknecht U.C."/>
            <person name="Hedderich R."/>
            <person name="Celic I."/>
            <person name="Soell D."/>
        </authorList>
    </citation>
    <scope>NUCLEOTIDE SEQUENCE [GENOMIC DNA]</scope>
    <scope>FUNCTION</scope>
</reference>
<reference key="2">
    <citation type="journal article" date="2004" name="J. Bacteriol.">
        <title>Complete genome sequence of the genetically tractable hydrogenotrophic methanogen Methanococcus maripaludis.</title>
        <authorList>
            <person name="Hendrickson E.L."/>
            <person name="Kaul R."/>
            <person name="Zhou Y."/>
            <person name="Bovee D."/>
            <person name="Chapman P."/>
            <person name="Chung J."/>
            <person name="Conway de Macario E."/>
            <person name="Dodsworth J.A."/>
            <person name="Gillett W."/>
            <person name="Graham D.E."/>
            <person name="Hackett M."/>
            <person name="Haydock A.K."/>
            <person name="Kang A."/>
            <person name="Land M.L."/>
            <person name="Levy R."/>
            <person name="Lie T.J."/>
            <person name="Major T.A."/>
            <person name="Moore B.C."/>
            <person name="Porat I."/>
            <person name="Palmeiri A."/>
            <person name="Rouse G."/>
            <person name="Saenphimmachak C."/>
            <person name="Soell D."/>
            <person name="Van Dien S."/>
            <person name="Wang T."/>
            <person name="Whitman W.B."/>
            <person name="Xia Q."/>
            <person name="Zhang Y."/>
            <person name="Larimer F.W."/>
            <person name="Olson M.V."/>
            <person name="Leigh J.A."/>
        </authorList>
    </citation>
    <scope>NUCLEOTIDE SEQUENCE [LARGE SCALE GENOMIC DNA]</scope>
    <source>
        <strain>DSM 14266 / JCM 13030 / NBRC 101832 / S2 / LL</strain>
    </source>
</reference>
<reference key="3">
    <citation type="journal article" date="2004" name="Eur. J. Biochem.">
        <title>The unusual methanogenic seryl-tRNA synthetase recognizes tRNASer species from all three kingdoms of life.</title>
        <authorList>
            <person name="Bilokapic S."/>
            <person name="Korencic D."/>
            <person name="Soell D."/>
            <person name="Weygand-Durasevic I."/>
        </authorList>
    </citation>
    <scope>FUNCTION</scope>
    <scope>SUBUNIT</scope>
</reference>